<gene>
    <name evidence="1" type="primary">secE</name>
    <name type="ordered locus">ML1907</name>
</gene>
<comment type="function">
    <text evidence="1">Essential subunit of the Sec protein translocation channel SecYEG. Clamps together the 2 halves of SecY. May contact the channel plug during translocation.</text>
</comment>
<comment type="subunit">
    <text evidence="1">Component of the Sec protein translocase complex. Heterotrimer consisting of SecY, SecE and SecG subunits. The heterotrimers can form oligomers, although 1 heterotrimer is thought to be able to translocate proteins. Interacts with the ribosome. Interacts with SecDF, and other proteins may be involved. Interacts with SecA.</text>
</comment>
<comment type="subcellular location">
    <subcellularLocation>
        <location evidence="1">Cell membrane</location>
        <topology evidence="1">Single-pass membrane protein</topology>
    </subcellularLocation>
</comment>
<comment type="similarity">
    <text evidence="1">Belongs to the SecE/SEC61-gamma family.</text>
</comment>
<keyword id="KW-1003">Cell membrane</keyword>
<keyword id="KW-0472">Membrane</keyword>
<keyword id="KW-0653">Protein transport</keyword>
<keyword id="KW-1185">Reference proteome</keyword>
<keyword id="KW-0811">Translocation</keyword>
<keyword id="KW-0812">Transmembrane</keyword>
<keyword id="KW-1133">Transmembrane helix</keyword>
<keyword id="KW-0813">Transport</keyword>
<protein>
    <recommendedName>
        <fullName evidence="1">Protein translocase subunit SecE</fullName>
    </recommendedName>
</protein>
<evidence type="ECO:0000255" key="1">
    <source>
        <dbReference type="HAMAP-Rule" id="MF_00422"/>
    </source>
</evidence>
<evidence type="ECO:0000256" key="2">
    <source>
        <dbReference type="SAM" id="MobiDB-lite"/>
    </source>
</evidence>
<organism>
    <name type="scientific">Mycobacterium leprae (strain TN)</name>
    <dbReference type="NCBI Taxonomy" id="272631"/>
    <lineage>
        <taxon>Bacteria</taxon>
        <taxon>Bacillati</taxon>
        <taxon>Actinomycetota</taxon>
        <taxon>Actinomycetes</taxon>
        <taxon>Mycobacteriales</taxon>
        <taxon>Mycobacteriaceae</taxon>
        <taxon>Mycobacterium</taxon>
    </lineage>
</organism>
<feature type="chain" id="PRO_0000104167" description="Protein translocase subunit SecE">
    <location>
        <begin position="1"/>
        <end position="146"/>
    </location>
</feature>
<feature type="transmembrane region" description="Helical" evidence="1">
    <location>
        <begin position="118"/>
        <end position="138"/>
    </location>
</feature>
<feature type="region of interest" description="Disordered" evidence="2">
    <location>
        <begin position="1"/>
        <end position="81"/>
    </location>
</feature>
<feature type="compositionally biased region" description="Gly residues" evidence="2">
    <location>
        <begin position="10"/>
        <end position="20"/>
    </location>
</feature>
<feature type="compositionally biased region" description="Polar residues" evidence="2">
    <location>
        <begin position="45"/>
        <end position="54"/>
    </location>
</feature>
<feature type="compositionally biased region" description="Basic and acidic residues" evidence="2">
    <location>
        <begin position="69"/>
        <end position="81"/>
    </location>
</feature>
<proteinExistence type="inferred from homology"/>
<accession>Q9CBJ9</accession>
<dbReference type="EMBL" id="AL583923">
    <property type="protein sequence ID" value="CAC30861.1"/>
    <property type="molecule type" value="Genomic_DNA"/>
</dbReference>
<dbReference type="PIR" id="E87147">
    <property type="entry name" value="E87147"/>
</dbReference>
<dbReference type="RefSeq" id="NP_302284.1">
    <property type="nucleotide sequence ID" value="NC_002677.1"/>
</dbReference>
<dbReference type="RefSeq" id="WP_010908605.1">
    <property type="nucleotide sequence ID" value="NC_002677.1"/>
</dbReference>
<dbReference type="SMR" id="Q9CBJ9"/>
<dbReference type="STRING" id="272631.gene:17575755"/>
<dbReference type="KEGG" id="mle:ML1907"/>
<dbReference type="PATRIC" id="fig|272631.5.peg.3615"/>
<dbReference type="Leproma" id="ML1907"/>
<dbReference type="eggNOG" id="COG0690">
    <property type="taxonomic scope" value="Bacteria"/>
</dbReference>
<dbReference type="HOGENOM" id="CLU_113663_1_2_11"/>
<dbReference type="OrthoDB" id="9805743at2"/>
<dbReference type="Proteomes" id="UP000000806">
    <property type="component" value="Chromosome"/>
</dbReference>
<dbReference type="GO" id="GO:0005886">
    <property type="term" value="C:plasma membrane"/>
    <property type="evidence" value="ECO:0007669"/>
    <property type="project" value="UniProtKB-SubCell"/>
</dbReference>
<dbReference type="GO" id="GO:0008320">
    <property type="term" value="F:protein transmembrane transporter activity"/>
    <property type="evidence" value="ECO:0007669"/>
    <property type="project" value="UniProtKB-UniRule"/>
</dbReference>
<dbReference type="GO" id="GO:0065002">
    <property type="term" value="P:intracellular protein transmembrane transport"/>
    <property type="evidence" value="ECO:0007669"/>
    <property type="project" value="UniProtKB-UniRule"/>
</dbReference>
<dbReference type="GO" id="GO:0009306">
    <property type="term" value="P:protein secretion"/>
    <property type="evidence" value="ECO:0007669"/>
    <property type="project" value="UniProtKB-UniRule"/>
</dbReference>
<dbReference type="GO" id="GO:0006605">
    <property type="term" value="P:protein targeting"/>
    <property type="evidence" value="ECO:0007669"/>
    <property type="project" value="UniProtKB-UniRule"/>
</dbReference>
<dbReference type="GO" id="GO:0043952">
    <property type="term" value="P:protein transport by the Sec complex"/>
    <property type="evidence" value="ECO:0007669"/>
    <property type="project" value="UniProtKB-UniRule"/>
</dbReference>
<dbReference type="Gene3D" id="1.20.5.1030">
    <property type="entry name" value="Preprotein translocase secy subunit"/>
    <property type="match status" value="1"/>
</dbReference>
<dbReference type="HAMAP" id="MF_00422">
    <property type="entry name" value="SecE"/>
    <property type="match status" value="1"/>
</dbReference>
<dbReference type="InterPro" id="IPR005807">
    <property type="entry name" value="SecE_bac"/>
</dbReference>
<dbReference type="InterPro" id="IPR038379">
    <property type="entry name" value="SecE_sf"/>
</dbReference>
<dbReference type="InterPro" id="IPR001901">
    <property type="entry name" value="Translocase_SecE/Sec61-g"/>
</dbReference>
<dbReference type="NCBIfam" id="NF005782">
    <property type="entry name" value="PRK07597.9-1"/>
    <property type="match status" value="1"/>
</dbReference>
<dbReference type="NCBIfam" id="TIGR00964">
    <property type="entry name" value="secE_bact"/>
    <property type="match status" value="1"/>
</dbReference>
<dbReference type="PANTHER" id="PTHR33910">
    <property type="entry name" value="PROTEIN TRANSLOCASE SUBUNIT SECE"/>
    <property type="match status" value="1"/>
</dbReference>
<dbReference type="PANTHER" id="PTHR33910:SF1">
    <property type="entry name" value="PROTEIN TRANSLOCASE SUBUNIT SECE"/>
    <property type="match status" value="1"/>
</dbReference>
<dbReference type="Pfam" id="PF00584">
    <property type="entry name" value="SecE"/>
    <property type="match status" value="1"/>
</dbReference>
<dbReference type="PROSITE" id="PS01067">
    <property type="entry name" value="SECE_SEC61G"/>
    <property type="match status" value="1"/>
</dbReference>
<name>SECE_MYCLE</name>
<sequence length="146" mass="15749">MSDERYAASDGGGTEVGSGTRGRTTVVTKPATRPQRPTGKRSRQRAANASNTGANVEVEESSTQAAIAKEGKVKKPKKSADRSANPIVFIYNYLKQVVGEMRKVIWPNRKQMLTYTSVVLAFLAFMVALVGLADFGLAKLVLLVFG</sequence>
<reference key="1">
    <citation type="journal article" date="2001" name="Nature">
        <title>Massive gene decay in the leprosy bacillus.</title>
        <authorList>
            <person name="Cole S.T."/>
            <person name="Eiglmeier K."/>
            <person name="Parkhill J."/>
            <person name="James K.D."/>
            <person name="Thomson N.R."/>
            <person name="Wheeler P.R."/>
            <person name="Honore N."/>
            <person name="Garnier T."/>
            <person name="Churcher C.M."/>
            <person name="Harris D.E."/>
            <person name="Mungall K.L."/>
            <person name="Basham D."/>
            <person name="Brown D."/>
            <person name="Chillingworth T."/>
            <person name="Connor R."/>
            <person name="Davies R.M."/>
            <person name="Devlin K."/>
            <person name="Duthoy S."/>
            <person name="Feltwell T."/>
            <person name="Fraser A."/>
            <person name="Hamlin N."/>
            <person name="Holroyd S."/>
            <person name="Hornsby T."/>
            <person name="Jagels K."/>
            <person name="Lacroix C."/>
            <person name="Maclean J."/>
            <person name="Moule S."/>
            <person name="Murphy L.D."/>
            <person name="Oliver K."/>
            <person name="Quail M.A."/>
            <person name="Rajandream M.A."/>
            <person name="Rutherford K.M."/>
            <person name="Rutter S."/>
            <person name="Seeger K."/>
            <person name="Simon S."/>
            <person name="Simmonds M."/>
            <person name="Skelton J."/>
            <person name="Squares R."/>
            <person name="Squares S."/>
            <person name="Stevens K."/>
            <person name="Taylor K."/>
            <person name="Whitehead S."/>
            <person name="Woodward J.R."/>
            <person name="Barrell B.G."/>
        </authorList>
    </citation>
    <scope>NUCLEOTIDE SEQUENCE [LARGE SCALE GENOMIC DNA]</scope>
    <source>
        <strain>TN</strain>
    </source>
</reference>